<dbReference type="EC" id="2.6.99.2" evidence="1"/>
<dbReference type="EMBL" id="BA000039">
    <property type="protein sequence ID" value="BAC08390.1"/>
    <property type="molecule type" value="Genomic_DNA"/>
</dbReference>
<dbReference type="RefSeq" id="NP_681628.1">
    <property type="nucleotide sequence ID" value="NC_004113.1"/>
</dbReference>
<dbReference type="RefSeq" id="WP_011056682.1">
    <property type="nucleotide sequence ID" value="NC_004113.1"/>
</dbReference>
<dbReference type="SMR" id="Q8DKM1"/>
<dbReference type="STRING" id="197221.gene:10747430"/>
<dbReference type="EnsemblBacteria" id="BAC08390">
    <property type="protein sequence ID" value="BAC08390"/>
    <property type="gene ID" value="BAC08390"/>
</dbReference>
<dbReference type="KEGG" id="tel:tlr0838"/>
<dbReference type="PATRIC" id="fig|197221.4.peg.883"/>
<dbReference type="eggNOG" id="COG0854">
    <property type="taxonomic scope" value="Bacteria"/>
</dbReference>
<dbReference type="UniPathway" id="UPA00244">
    <property type="reaction ID" value="UER00313"/>
</dbReference>
<dbReference type="Proteomes" id="UP000000440">
    <property type="component" value="Chromosome"/>
</dbReference>
<dbReference type="GO" id="GO:0005829">
    <property type="term" value="C:cytosol"/>
    <property type="evidence" value="ECO:0007669"/>
    <property type="project" value="TreeGrafter"/>
</dbReference>
<dbReference type="GO" id="GO:0033856">
    <property type="term" value="F:pyridoxine 5'-phosphate synthase activity"/>
    <property type="evidence" value="ECO:0007669"/>
    <property type="project" value="UniProtKB-EC"/>
</dbReference>
<dbReference type="GO" id="GO:0008615">
    <property type="term" value="P:pyridoxine biosynthetic process"/>
    <property type="evidence" value="ECO:0007669"/>
    <property type="project" value="UniProtKB-UniRule"/>
</dbReference>
<dbReference type="CDD" id="cd00003">
    <property type="entry name" value="PNPsynthase"/>
    <property type="match status" value="1"/>
</dbReference>
<dbReference type="Gene3D" id="3.20.20.70">
    <property type="entry name" value="Aldolase class I"/>
    <property type="match status" value="1"/>
</dbReference>
<dbReference type="HAMAP" id="MF_00279">
    <property type="entry name" value="PdxJ"/>
    <property type="match status" value="1"/>
</dbReference>
<dbReference type="InterPro" id="IPR013785">
    <property type="entry name" value="Aldolase_TIM"/>
</dbReference>
<dbReference type="InterPro" id="IPR004569">
    <property type="entry name" value="PyrdxlP_synth_PdxJ"/>
</dbReference>
<dbReference type="InterPro" id="IPR036130">
    <property type="entry name" value="Pyridoxine-5'_phos_synth"/>
</dbReference>
<dbReference type="NCBIfam" id="TIGR00559">
    <property type="entry name" value="pdxJ"/>
    <property type="match status" value="1"/>
</dbReference>
<dbReference type="NCBIfam" id="NF003623">
    <property type="entry name" value="PRK05265.1-1"/>
    <property type="match status" value="1"/>
</dbReference>
<dbReference type="NCBIfam" id="NF003625">
    <property type="entry name" value="PRK05265.1-3"/>
    <property type="match status" value="1"/>
</dbReference>
<dbReference type="NCBIfam" id="NF003627">
    <property type="entry name" value="PRK05265.1-5"/>
    <property type="match status" value="1"/>
</dbReference>
<dbReference type="PANTHER" id="PTHR30456">
    <property type="entry name" value="PYRIDOXINE 5'-PHOSPHATE SYNTHASE"/>
    <property type="match status" value="1"/>
</dbReference>
<dbReference type="PANTHER" id="PTHR30456:SF0">
    <property type="entry name" value="PYRIDOXINE 5'-PHOSPHATE SYNTHASE"/>
    <property type="match status" value="1"/>
</dbReference>
<dbReference type="Pfam" id="PF03740">
    <property type="entry name" value="PdxJ"/>
    <property type="match status" value="1"/>
</dbReference>
<dbReference type="SUPFAM" id="SSF63892">
    <property type="entry name" value="Pyridoxine 5'-phosphate synthase"/>
    <property type="match status" value="1"/>
</dbReference>
<proteinExistence type="inferred from homology"/>
<keyword id="KW-0963">Cytoplasm</keyword>
<keyword id="KW-0664">Pyridoxine biosynthesis</keyword>
<keyword id="KW-1185">Reference proteome</keyword>
<keyword id="KW-0808">Transferase</keyword>
<evidence type="ECO:0000255" key="1">
    <source>
        <dbReference type="HAMAP-Rule" id="MF_00279"/>
    </source>
</evidence>
<name>PDXJ_THEVB</name>
<organism>
    <name type="scientific">Thermosynechococcus vestitus (strain NIES-2133 / IAM M-273 / BP-1)</name>
    <dbReference type="NCBI Taxonomy" id="197221"/>
    <lineage>
        <taxon>Bacteria</taxon>
        <taxon>Bacillati</taxon>
        <taxon>Cyanobacteriota</taxon>
        <taxon>Cyanophyceae</taxon>
        <taxon>Acaryochloridales</taxon>
        <taxon>Thermosynechococcaceae</taxon>
        <taxon>Thermosynechococcus</taxon>
    </lineage>
</organism>
<protein>
    <recommendedName>
        <fullName evidence="1">Pyridoxine 5'-phosphate synthase</fullName>
        <shortName evidence="1">PNP synthase</shortName>
        <ecNumber evidence="1">2.6.99.2</ecNumber>
    </recommendedName>
</protein>
<reference key="1">
    <citation type="journal article" date="2002" name="DNA Res.">
        <title>Complete genome structure of the thermophilic cyanobacterium Thermosynechococcus elongatus BP-1.</title>
        <authorList>
            <person name="Nakamura Y."/>
            <person name="Kaneko T."/>
            <person name="Sato S."/>
            <person name="Ikeuchi M."/>
            <person name="Katoh H."/>
            <person name="Sasamoto S."/>
            <person name="Watanabe A."/>
            <person name="Iriguchi M."/>
            <person name="Kawashima K."/>
            <person name="Kimura T."/>
            <person name="Kishida Y."/>
            <person name="Kiyokawa C."/>
            <person name="Kohara M."/>
            <person name="Matsumoto M."/>
            <person name="Matsuno A."/>
            <person name="Nakazaki N."/>
            <person name="Shimpo S."/>
            <person name="Sugimoto M."/>
            <person name="Takeuchi C."/>
            <person name="Yamada M."/>
            <person name="Tabata S."/>
        </authorList>
    </citation>
    <scope>NUCLEOTIDE SEQUENCE [LARGE SCALE GENOMIC DNA]</scope>
    <source>
        <strain>NIES-2133 / IAM M-273 / BP-1</strain>
    </source>
</reference>
<sequence>MATLGVNIDHVATIRQARRTVEPDPVAAALLAELGGADGITVHLREDRRHIQERDVRLLRQTVRTHLNLEMAATPEMVAIALDIRPDYVTLVPERREEVTTEGGLDVVSQQEPLTQVVQTLQGAGIPVSLFIDADPTQLAAAAKTTAQFIELHTGRYAEAKGEVAQQRELAILADGVQQAKALGLRVNAGHGLTYSNVGAIARLEGIEELNIGHTIISRAVLVGMVQAVRDMKALISP</sequence>
<comment type="function">
    <text evidence="1">Catalyzes the complicated ring closure reaction between the two acyclic compounds 1-deoxy-D-xylulose-5-phosphate (DXP) and 3-amino-2-oxopropyl phosphate (1-amino-acetone-3-phosphate or AAP) to form pyridoxine 5'-phosphate (PNP) and inorganic phosphate.</text>
</comment>
<comment type="catalytic activity">
    <reaction evidence="1">
        <text>3-amino-2-oxopropyl phosphate + 1-deoxy-D-xylulose 5-phosphate = pyridoxine 5'-phosphate + phosphate + 2 H2O + H(+)</text>
        <dbReference type="Rhea" id="RHEA:15265"/>
        <dbReference type="ChEBI" id="CHEBI:15377"/>
        <dbReference type="ChEBI" id="CHEBI:15378"/>
        <dbReference type="ChEBI" id="CHEBI:43474"/>
        <dbReference type="ChEBI" id="CHEBI:57279"/>
        <dbReference type="ChEBI" id="CHEBI:57792"/>
        <dbReference type="ChEBI" id="CHEBI:58589"/>
        <dbReference type="EC" id="2.6.99.2"/>
    </reaction>
</comment>
<comment type="pathway">
    <text evidence="1">Cofactor biosynthesis; pyridoxine 5'-phosphate biosynthesis; pyridoxine 5'-phosphate from D-erythrose 4-phosphate: step 5/5.</text>
</comment>
<comment type="subunit">
    <text evidence="1">Homooctamer; tetramer of dimers.</text>
</comment>
<comment type="subcellular location">
    <subcellularLocation>
        <location evidence="1">Cytoplasm</location>
    </subcellularLocation>
</comment>
<comment type="similarity">
    <text evidence="1">Belongs to the PNP synthase family.</text>
</comment>
<feature type="chain" id="PRO_0000190132" description="Pyridoxine 5'-phosphate synthase">
    <location>
        <begin position="1"/>
        <end position="238"/>
    </location>
</feature>
<feature type="active site" description="Proton acceptor" evidence="1">
    <location>
        <position position="43"/>
    </location>
</feature>
<feature type="active site" description="Proton acceptor" evidence="1">
    <location>
        <position position="70"/>
    </location>
</feature>
<feature type="active site" description="Proton donor" evidence="1">
    <location>
        <position position="191"/>
    </location>
</feature>
<feature type="binding site" evidence="1">
    <location>
        <position position="7"/>
    </location>
    <ligand>
        <name>3-amino-2-oxopropyl phosphate</name>
        <dbReference type="ChEBI" id="CHEBI:57279"/>
    </ligand>
</feature>
<feature type="binding site" evidence="1">
    <location>
        <begin position="9"/>
        <end position="10"/>
    </location>
    <ligand>
        <name>1-deoxy-D-xylulose 5-phosphate</name>
        <dbReference type="ChEBI" id="CHEBI:57792"/>
    </ligand>
</feature>
<feature type="binding site" evidence="1">
    <location>
        <position position="18"/>
    </location>
    <ligand>
        <name>3-amino-2-oxopropyl phosphate</name>
        <dbReference type="ChEBI" id="CHEBI:57279"/>
    </ligand>
</feature>
<feature type="binding site" evidence="1">
    <location>
        <position position="45"/>
    </location>
    <ligand>
        <name>1-deoxy-D-xylulose 5-phosphate</name>
        <dbReference type="ChEBI" id="CHEBI:57792"/>
    </ligand>
</feature>
<feature type="binding site" evidence="1">
    <location>
        <position position="50"/>
    </location>
    <ligand>
        <name>1-deoxy-D-xylulose 5-phosphate</name>
        <dbReference type="ChEBI" id="CHEBI:57792"/>
    </ligand>
</feature>
<feature type="binding site" evidence="1">
    <location>
        <position position="100"/>
    </location>
    <ligand>
        <name>1-deoxy-D-xylulose 5-phosphate</name>
        <dbReference type="ChEBI" id="CHEBI:57792"/>
    </ligand>
</feature>
<feature type="binding site" evidence="1">
    <location>
        <position position="192"/>
    </location>
    <ligand>
        <name>3-amino-2-oxopropyl phosphate</name>
        <dbReference type="ChEBI" id="CHEBI:57279"/>
    </ligand>
</feature>
<feature type="binding site" evidence="1">
    <location>
        <begin position="213"/>
        <end position="214"/>
    </location>
    <ligand>
        <name>3-amino-2-oxopropyl phosphate</name>
        <dbReference type="ChEBI" id="CHEBI:57279"/>
    </ligand>
</feature>
<feature type="site" description="Transition state stabilizer" evidence="1">
    <location>
        <position position="151"/>
    </location>
</feature>
<accession>Q8DKM1</accession>
<gene>
    <name evidence="1" type="primary">pdxJ</name>
    <name type="ordered locus">tlr0838</name>
</gene>